<feature type="chain" id="PRO_1000005422" description="NAD kinase">
    <location>
        <begin position="1"/>
        <end position="294"/>
    </location>
</feature>
<feature type="active site" description="Proton acceptor" evidence="1">
    <location>
        <position position="72"/>
    </location>
</feature>
<feature type="binding site" evidence="1">
    <location>
        <begin position="72"/>
        <end position="73"/>
    </location>
    <ligand>
        <name>NAD(+)</name>
        <dbReference type="ChEBI" id="CHEBI:57540"/>
    </ligand>
</feature>
<feature type="binding site" evidence="1">
    <location>
        <begin position="146"/>
        <end position="147"/>
    </location>
    <ligand>
        <name>NAD(+)</name>
        <dbReference type="ChEBI" id="CHEBI:57540"/>
    </ligand>
</feature>
<feature type="binding site" evidence="1">
    <location>
        <position position="157"/>
    </location>
    <ligand>
        <name>NAD(+)</name>
        <dbReference type="ChEBI" id="CHEBI:57540"/>
    </ligand>
</feature>
<feature type="binding site" evidence="1">
    <location>
        <position position="174"/>
    </location>
    <ligand>
        <name>NAD(+)</name>
        <dbReference type="ChEBI" id="CHEBI:57540"/>
    </ligand>
</feature>
<feature type="binding site" evidence="1">
    <location>
        <position position="176"/>
    </location>
    <ligand>
        <name>NAD(+)</name>
        <dbReference type="ChEBI" id="CHEBI:57540"/>
    </ligand>
</feature>
<feature type="binding site" evidence="1">
    <location>
        <begin position="187"/>
        <end position="192"/>
    </location>
    <ligand>
        <name>NAD(+)</name>
        <dbReference type="ChEBI" id="CHEBI:57540"/>
    </ligand>
</feature>
<feature type="binding site" evidence="1">
    <location>
        <position position="247"/>
    </location>
    <ligand>
        <name>NAD(+)</name>
        <dbReference type="ChEBI" id="CHEBI:57540"/>
    </ligand>
</feature>
<organism>
    <name type="scientific">Marinobacter nauticus (strain ATCC 700491 / DSM 11845 / VT8)</name>
    <name type="common">Marinobacter aquaeolei</name>
    <dbReference type="NCBI Taxonomy" id="351348"/>
    <lineage>
        <taxon>Bacteria</taxon>
        <taxon>Pseudomonadati</taxon>
        <taxon>Pseudomonadota</taxon>
        <taxon>Gammaproteobacteria</taxon>
        <taxon>Pseudomonadales</taxon>
        <taxon>Marinobacteraceae</taxon>
        <taxon>Marinobacter</taxon>
    </lineage>
</organism>
<accession>A1U2D4</accession>
<reference key="1">
    <citation type="journal article" date="2011" name="Appl. Environ. Microbiol.">
        <title>Genomic potential of Marinobacter aquaeolei, a biogeochemical 'opportunitroph'.</title>
        <authorList>
            <person name="Singer E."/>
            <person name="Webb E.A."/>
            <person name="Nelson W.C."/>
            <person name="Heidelberg J.F."/>
            <person name="Ivanova N."/>
            <person name="Pati A."/>
            <person name="Edwards K.J."/>
        </authorList>
    </citation>
    <scope>NUCLEOTIDE SEQUENCE [LARGE SCALE GENOMIC DNA]</scope>
    <source>
        <strain>ATCC 700491 / DSM 11845 / VT8</strain>
    </source>
</reference>
<evidence type="ECO:0000255" key="1">
    <source>
        <dbReference type="HAMAP-Rule" id="MF_00361"/>
    </source>
</evidence>
<sequence>MDQFRNIGIVGRMGSVKVVESLRQLKQYLTANNYHVIIEEDTSTMIPGHGLQVASKKLLGEICDLVIVVGGDGSLLGAARELAKSKIPILGVNRGRLGFLTDISPSDLEERLARVLEGDYIEESRFLLDGHVERNGQPLGYGSALNDVVLHPGKSTRMIGFDLFIDGHFVYSQRSDGLIVATPTGSTAYSLSAGGPIMHPKLDAVVLVPMFPHTLSSRPIVVDGKSEIKLVIGETNETYPQVSFDGQMNIACAPGDIIRITKKPFKIRLIHPTDHNFYATCRDKLGWASEIAAS</sequence>
<comment type="function">
    <text evidence="1">Involved in the regulation of the intracellular balance of NAD and NADP, and is a key enzyme in the biosynthesis of NADP. Catalyzes specifically the phosphorylation on 2'-hydroxyl of the adenosine moiety of NAD to yield NADP.</text>
</comment>
<comment type="catalytic activity">
    <reaction evidence="1">
        <text>NAD(+) + ATP = ADP + NADP(+) + H(+)</text>
        <dbReference type="Rhea" id="RHEA:18629"/>
        <dbReference type="ChEBI" id="CHEBI:15378"/>
        <dbReference type="ChEBI" id="CHEBI:30616"/>
        <dbReference type="ChEBI" id="CHEBI:57540"/>
        <dbReference type="ChEBI" id="CHEBI:58349"/>
        <dbReference type="ChEBI" id="CHEBI:456216"/>
        <dbReference type="EC" id="2.7.1.23"/>
    </reaction>
</comment>
<comment type="cofactor">
    <cofactor evidence="1">
        <name>a divalent metal cation</name>
        <dbReference type="ChEBI" id="CHEBI:60240"/>
    </cofactor>
</comment>
<comment type="subcellular location">
    <subcellularLocation>
        <location evidence="1">Cytoplasm</location>
    </subcellularLocation>
</comment>
<comment type="similarity">
    <text evidence="1">Belongs to the NAD kinase family.</text>
</comment>
<name>NADK_MARN8</name>
<gene>
    <name evidence="1" type="primary">nadK</name>
    <name type="ordered locus">Maqu_2072</name>
</gene>
<dbReference type="EC" id="2.7.1.23" evidence="1"/>
<dbReference type="EMBL" id="CP000514">
    <property type="protein sequence ID" value="ABM19153.1"/>
    <property type="molecule type" value="Genomic_DNA"/>
</dbReference>
<dbReference type="RefSeq" id="WP_011785545.1">
    <property type="nucleotide sequence ID" value="NC_008740.1"/>
</dbReference>
<dbReference type="SMR" id="A1U2D4"/>
<dbReference type="STRING" id="351348.Maqu_2072"/>
<dbReference type="GeneID" id="31820698"/>
<dbReference type="KEGG" id="maq:Maqu_2072"/>
<dbReference type="eggNOG" id="COG0061">
    <property type="taxonomic scope" value="Bacteria"/>
</dbReference>
<dbReference type="HOGENOM" id="CLU_008831_0_1_6"/>
<dbReference type="OrthoDB" id="9774737at2"/>
<dbReference type="Proteomes" id="UP000000998">
    <property type="component" value="Chromosome"/>
</dbReference>
<dbReference type="GO" id="GO:0005737">
    <property type="term" value="C:cytoplasm"/>
    <property type="evidence" value="ECO:0007669"/>
    <property type="project" value="UniProtKB-SubCell"/>
</dbReference>
<dbReference type="GO" id="GO:0005524">
    <property type="term" value="F:ATP binding"/>
    <property type="evidence" value="ECO:0007669"/>
    <property type="project" value="UniProtKB-KW"/>
</dbReference>
<dbReference type="GO" id="GO:0046872">
    <property type="term" value="F:metal ion binding"/>
    <property type="evidence" value="ECO:0007669"/>
    <property type="project" value="UniProtKB-UniRule"/>
</dbReference>
<dbReference type="GO" id="GO:0051287">
    <property type="term" value="F:NAD binding"/>
    <property type="evidence" value="ECO:0007669"/>
    <property type="project" value="UniProtKB-ARBA"/>
</dbReference>
<dbReference type="GO" id="GO:0003951">
    <property type="term" value="F:NAD+ kinase activity"/>
    <property type="evidence" value="ECO:0007669"/>
    <property type="project" value="UniProtKB-UniRule"/>
</dbReference>
<dbReference type="GO" id="GO:0019674">
    <property type="term" value="P:NAD metabolic process"/>
    <property type="evidence" value="ECO:0007669"/>
    <property type="project" value="InterPro"/>
</dbReference>
<dbReference type="GO" id="GO:0006741">
    <property type="term" value="P:NADP biosynthetic process"/>
    <property type="evidence" value="ECO:0007669"/>
    <property type="project" value="UniProtKB-UniRule"/>
</dbReference>
<dbReference type="FunFam" id="2.60.200.30:FF:000009">
    <property type="entry name" value="Poly(P)/ATP NAD kinase"/>
    <property type="match status" value="1"/>
</dbReference>
<dbReference type="Gene3D" id="3.40.50.10330">
    <property type="entry name" value="Probable inorganic polyphosphate/atp-NAD kinase, domain 1"/>
    <property type="match status" value="1"/>
</dbReference>
<dbReference type="Gene3D" id="2.60.200.30">
    <property type="entry name" value="Probable inorganic polyphosphate/atp-NAD kinase, domain 2"/>
    <property type="match status" value="1"/>
</dbReference>
<dbReference type="HAMAP" id="MF_00361">
    <property type="entry name" value="NAD_kinase"/>
    <property type="match status" value="1"/>
</dbReference>
<dbReference type="InterPro" id="IPR017438">
    <property type="entry name" value="ATP-NAD_kinase_N"/>
</dbReference>
<dbReference type="InterPro" id="IPR017437">
    <property type="entry name" value="ATP-NAD_kinase_PpnK-typ_C"/>
</dbReference>
<dbReference type="InterPro" id="IPR016064">
    <property type="entry name" value="NAD/diacylglycerol_kinase_sf"/>
</dbReference>
<dbReference type="InterPro" id="IPR002504">
    <property type="entry name" value="NADK"/>
</dbReference>
<dbReference type="NCBIfam" id="NF002306">
    <property type="entry name" value="PRK01231.1"/>
    <property type="match status" value="1"/>
</dbReference>
<dbReference type="PANTHER" id="PTHR20275">
    <property type="entry name" value="NAD KINASE"/>
    <property type="match status" value="1"/>
</dbReference>
<dbReference type="PANTHER" id="PTHR20275:SF0">
    <property type="entry name" value="NAD KINASE"/>
    <property type="match status" value="1"/>
</dbReference>
<dbReference type="Pfam" id="PF01513">
    <property type="entry name" value="NAD_kinase"/>
    <property type="match status" value="1"/>
</dbReference>
<dbReference type="Pfam" id="PF20143">
    <property type="entry name" value="NAD_kinase_C"/>
    <property type="match status" value="1"/>
</dbReference>
<dbReference type="SUPFAM" id="SSF111331">
    <property type="entry name" value="NAD kinase/diacylglycerol kinase-like"/>
    <property type="match status" value="1"/>
</dbReference>
<protein>
    <recommendedName>
        <fullName evidence="1">NAD kinase</fullName>
        <ecNumber evidence="1">2.7.1.23</ecNumber>
    </recommendedName>
    <alternativeName>
        <fullName evidence="1">ATP-dependent NAD kinase</fullName>
    </alternativeName>
</protein>
<keyword id="KW-0067">ATP-binding</keyword>
<keyword id="KW-0963">Cytoplasm</keyword>
<keyword id="KW-0418">Kinase</keyword>
<keyword id="KW-0520">NAD</keyword>
<keyword id="KW-0521">NADP</keyword>
<keyword id="KW-0547">Nucleotide-binding</keyword>
<keyword id="KW-0808">Transferase</keyword>
<proteinExistence type="inferred from homology"/>